<gene>
    <name evidence="1" type="primary">rpsB</name>
    <name evidence="1" type="synonym">rps2</name>
    <name type="ordered locus">PCC8801_2578</name>
</gene>
<evidence type="ECO:0000255" key="1">
    <source>
        <dbReference type="HAMAP-Rule" id="MF_00291"/>
    </source>
</evidence>
<evidence type="ECO:0000256" key="2">
    <source>
        <dbReference type="SAM" id="MobiDB-lite"/>
    </source>
</evidence>
<evidence type="ECO:0000305" key="3"/>
<name>RS2_RIPO1</name>
<protein>
    <recommendedName>
        <fullName evidence="1">Small ribosomal subunit protein uS2</fullName>
    </recommendedName>
    <alternativeName>
        <fullName evidence="3">30S ribosomal protein S2</fullName>
    </alternativeName>
</protein>
<sequence length="268" mass="30641">MPVVSLAELLESGVHFGHQTRRWNPKMSPYIYTARNGVHIIDLVQTAQLMENAYEYVRKSSEQGKRFLFIGTKRQAAGIIAQEASRCGANYVNQRWLGGMLTNWETIKGRVERLKELESMEENGAISRRPKKEAAVLRRELGKLDKYLGGIKTMRKLPDVVVIVDQRREYNAISECQKLGIPIISMLDTNCDPDFADIPIPANDDAIRSIKLILGKLADAIYEGRHGQLDSEQDYEDFDESISDEYDDYEDEEEYEEQDLEVDASEDE</sequence>
<reference key="1">
    <citation type="journal article" date="2011" name="MBio">
        <title>Novel metabolic attributes of the genus Cyanothece, comprising a group of unicellular nitrogen-fixing Cyanobacteria.</title>
        <authorList>
            <person name="Bandyopadhyay A."/>
            <person name="Elvitigala T."/>
            <person name="Welsh E."/>
            <person name="Stockel J."/>
            <person name="Liberton M."/>
            <person name="Min H."/>
            <person name="Sherman L.A."/>
            <person name="Pakrasi H.B."/>
        </authorList>
    </citation>
    <scope>NUCLEOTIDE SEQUENCE [LARGE SCALE GENOMIC DNA]</scope>
    <source>
        <strain>PCC 8801 / RF-1</strain>
    </source>
</reference>
<comment type="similarity">
    <text evidence="1">Belongs to the universal ribosomal protein uS2 family.</text>
</comment>
<feature type="chain" id="PRO_1000119420" description="Small ribosomal subunit protein uS2">
    <location>
        <begin position="1"/>
        <end position="268"/>
    </location>
</feature>
<feature type="region of interest" description="Disordered" evidence="2">
    <location>
        <begin position="228"/>
        <end position="268"/>
    </location>
</feature>
<feature type="compositionally biased region" description="Acidic residues" evidence="2">
    <location>
        <begin position="231"/>
        <end position="268"/>
    </location>
</feature>
<keyword id="KW-1185">Reference proteome</keyword>
<keyword id="KW-0687">Ribonucleoprotein</keyword>
<keyword id="KW-0689">Ribosomal protein</keyword>
<organism>
    <name type="scientific">Rippkaea orientalis (strain PCC 8801 / RF-1)</name>
    <name type="common">Cyanothece sp. (strain PCC 8801)</name>
    <dbReference type="NCBI Taxonomy" id="41431"/>
    <lineage>
        <taxon>Bacteria</taxon>
        <taxon>Bacillati</taxon>
        <taxon>Cyanobacteriota</taxon>
        <taxon>Cyanophyceae</taxon>
        <taxon>Oscillatoriophycideae</taxon>
        <taxon>Chroococcales</taxon>
        <taxon>Aphanothecaceae</taxon>
        <taxon>Rippkaea</taxon>
        <taxon>Rippkaea orientalis</taxon>
    </lineage>
</organism>
<proteinExistence type="inferred from homology"/>
<dbReference type="EMBL" id="CP001287">
    <property type="protein sequence ID" value="ACK66584.1"/>
    <property type="molecule type" value="Genomic_DNA"/>
</dbReference>
<dbReference type="RefSeq" id="WP_012595851.1">
    <property type="nucleotide sequence ID" value="NC_011726.1"/>
</dbReference>
<dbReference type="SMR" id="B7K4S8"/>
<dbReference type="STRING" id="41431.PCC8801_2578"/>
<dbReference type="KEGG" id="cyp:PCC8801_2578"/>
<dbReference type="eggNOG" id="COG0052">
    <property type="taxonomic scope" value="Bacteria"/>
</dbReference>
<dbReference type="HOGENOM" id="CLU_040318_1_3_3"/>
<dbReference type="OrthoDB" id="9808036at2"/>
<dbReference type="Proteomes" id="UP000008204">
    <property type="component" value="Chromosome"/>
</dbReference>
<dbReference type="GO" id="GO:0022627">
    <property type="term" value="C:cytosolic small ribosomal subunit"/>
    <property type="evidence" value="ECO:0007669"/>
    <property type="project" value="TreeGrafter"/>
</dbReference>
<dbReference type="GO" id="GO:0003735">
    <property type="term" value="F:structural constituent of ribosome"/>
    <property type="evidence" value="ECO:0007669"/>
    <property type="project" value="InterPro"/>
</dbReference>
<dbReference type="GO" id="GO:0006412">
    <property type="term" value="P:translation"/>
    <property type="evidence" value="ECO:0007669"/>
    <property type="project" value="UniProtKB-UniRule"/>
</dbReference>
<dbReference type="CDD" id="cd01425">
    <property type="entry name" value="RPS2"/>
    <property type="match status" value="1"/>
</dbReference>
<dbReference type="FunFam" id="1.10.287.610:FF:000001">
    <property type="entry name" value="30S ribosomal protein S2"/>
    <property type="match status" value="1"/>
</dbReference>
<dbReference type="Gene3D" id="3.40.50.10490">
    <property type="entry name" value="Glucose-6-phosphate isomerase like protein, domain 1"/>
    <property type="match status" value="1"/>
</dbReference>
<dbReference type="Gene3D" id="1.10.287.610">
    <property type="entry name" value="Helix hairpin bin"/>
    <property type="match status" value="1"/>
</dbReference>
<dbReference type="HAMAP" id="MF_00291_B">
    <property type="entry name" value="Ribosomal_uS2_B"/>
    <property type="match status" value="1"/>
</dbReference>
<dbReference type="InterPro" id="IPR001865">
    <property type="entry name" value="Ribosomal_uS2"/>
</dbReference>
<dbReference type="InterPro" id="IPR005706">
    <property type="entry name" value="Ribosomal_uS2_bac/mit/plastid"/>
</dbReference>
<dbReference type="InterPro" id="IPR018130">
    <property type="entry name" value="Ribosomal_uS2_CS"/>
</dbReference>
<dbReference type="InterPro" id="IPR023591">
    <property type="entry name" value="Ribosomal_uS2_flav_dom_sf"/>
</dbReference>
<dbReference type="NCBIfam" id="TIGR01011">
    <property type="entry name" value="rpsB_bact"/>
    <property type="match status" value="1"/>
</dbReference>
<dbReference type="PANTHER" id="PTHR12534">
    <property type="entry name" value="30S RIBOSOMAL PROTEIN S2 PROKARYOTIC AND ORGANELLAR"/>
    <property type="match status" value="1"/>
</dbReference>
<dbReference type="PANTHER" id="PTHR12534:SF0">
    <property type="entry name" value="SMALL RIBOSOMAL SUBUNIT PROTEIN US2M"/>
    <property type="match status" value="1"/>
</dbReference>
<dbReference type="Pfam" id="PF00318">
    <property type="entry name" value="Ribosomal_S2"/>
    <property type="match status" value="1"/>
</dbReference>
<dbReference type="PRINTS" id="PR00395">
    <property type="entry name" value="RIBOSOMALS2"/>
</dbReference>
<dbReference type="SUPFAM" id="SSF52313">
    <property type="entry name" value="Ribosomal protein S2"/>
    <property type="match status" value="1"/>
</dbReference>
<dbReference type="PROSITE" id="PS00962">
    <property type="entry name" value="RIBOSOMAL_S2_1"/>
    <property type="match status" value="1"/>
</dbReference>
<dbReference type="PROSITE" id="PS00963">
    <property type="entry name" value="RIBOSOMAL_S2_2"/>
    <property type="match status" value="1"/>
</dbReference>
<accession>B7K4S8</accession>